<gene>
    <name evidence="1" type="primary">rpsM</name>
    <name type="ordered locus">swp_2033</name>
</gene>
<feature type="chain" id="PRO_1000141310" description="Small ribosomal subunit protein uS13">
    <location>
        <begin position="1"/>
        <end position="118"/>
    </location>
</feature>
<feature type="region of interest" description="Disordered" evidence="2">
    <location>
        <begin position="94"/>
        <end position="118"/>
    </location>
</feature>
<proteinExistence type="inferred from homology"/>
<dbReference type="EMBL" id="CP000472">
    <property type="protein sequence ID" value="ACJ28789.1"/>
    <property type="molecule type" value="Genomic_DNA"/>
</dbReference>
<dbReference type="RefSeq" id="WP_012153475.1">
    <property type="nucleotide sequence ID" value="NC_011566.1"/>
</dbReference>
<dbReference type="SMR" id="B8CNF5"/>
<dbReference type="STRING" id="225849.swp_2033"/>
<dbReference type="KEGG" id="swp:swp_2033"/>
<dbReference type="eggNOG" id="COG0099">
    <property type="taxonomic scope" value="Bacteria"/>
</dbReference>
<dbReference type="HOGENOM" id="CLU_103849_1_2_6"/>
<dbReference type="OrthoDB" id="9803610at2"/>
<dbReference type="Proteomes" id="UP000000753">
    <property type="component" value="Chromosome"/>
</dbReference>
<dbReference type="GO" id="GO:0005829">
    <property type="term" value="C:cytosol"/>
    <property type="evidence" value="ECO:0007669"/>
    <property type="project" value="TreeGrafter"/>
</dbReference>
<dbReference type="GO" id="GO:0015935">
    <property type="term" value="C:small ribosomal subunit"/>
    <property type="evidence" value="ECO:0007669"/>
    <property type="project" value="TreeGrafter"/>
</dbReference>
<dbReference type="GO" id="GO:0019843">
    <property type="term" value="F:rRNA binding"/>
    <property type="evidence" value="ECO:0007669"/>
    <property type="project" value="UniProtKB-UniRule"/>
</dbReference>
<dbReference type="GO" id="GO:0003735">
    <property type="term" value="F:structural constituent of ribosome"/>
    <property type="evidence" value="ECO:0007669"/>
    <property type="project" value="InterPro"/>
</dbReference>
<dbReference type="GO" id="GO:0000049">
    <property type="term" value="F:tRNA binding"/>
    <property type="evidence" value="ECO:0007669"/>
    <property type="project" value="UniProtKB-UniRule"/>
</dbReference>
<dbReference type="GO" id="GO:0006412">
    <property type="term" value="P:translation"/>
    <property type="evidence" value="ECO:0007669"/>
    <property type="project" value="UniProtKB-UniRule"/>
</dbReference>
<dbReference type="FunFam" id="1.10.8.50:FF:000001">
    <property type="entry name" value="30S ribosomal protein S13"/>
    <property type="match status" value="1"/>
</dbReference>
<dbReference type="FunFam" id="4.10.910.10:FF:000001">
    <property type="entry name" value="30S ribosomal protein S13"/>
    <property type="match status" value="1"/>
</dbReference>
<dbReference type="Gene3D" id="1.10.8.50">
    <property type="match status" value="1"/>
</dbReference>
<dbReference type="Gene3D" id="4.10.910.10">
    <property type="entry name" value="30s ribosomal protein s13, domain 2"/>
    <property type="match status" value="1"/>
</dbReference>
<dbReference type="HAMAP" id="MF_01315">
    <property type="entry name" value="Ribosomal_uS13"/>
    <property type="match status" value="1"/>
</dbReference>
<dbReference type="InterPro" id="IPR027437">
    <property type="entry name" value="Rbsml_uS13_C"/>
</dbReference>
<dbReference type="InterPro" id="IPR001892">
    <property type="entry name" value="Ribosomal_uS13"/>
</dbReference>
<dbReference type="InterPro" id="IPR010979">
    <property type="entry name" value="Ribosomal_uS13-like_H2TH"/>
</dbReference>
<dbReference type="InterPro" id="IPR019980">
    <property type="entry name" value="Ribosomal_uS13_bac-type"/>
</dbReference>
<dbReference type="InterPro" id="IPR018269">
    <property type="entry name" value="Ribosomal_uS13_CS"/>
</dbReference>
<dbReference type="NCBIfam" id="TIGR03631">
    <property type="entry name" value="uS13_bact"/>
    <property type="match status" value="1"/>
</dbReference>
<dbReference type="PANTHER" id="PTHR10871">
    <property type="entry name" value="30S RIBOSOMAL PROTEIN S13/40S RIBOSOMAL PROTEIN S18"/>
    <property type="match status" value="1"/>
</dbReference>
<dbReference type="PANTHER" id="PTHR10871:SF1">
    <property type="entry name" value="SMALL RIBOSOMAL SUBUNIT PROTEIN US13M"/>
    <property type="match status" value="1"/>
</dbReference>
<dbReference type="Pfam" id="PF00416">
    <property type="entry name" value="Ribosomal_S13"/>
    <property type="match status" value="1"/>
</dbReference>
<dbReference type="PIRSF" id="PIRSF002134">
    <property type="entry name" value="Ribosomal_S13"/>
    <property type="match status" value="1"/>
</dbReference>
<dbReference type="SUPFAM" id="SSF46946">
    <property type="entry name" value="S13-like H2TH domain"/>
    <property type="match status" value="1"/>
</dbReference>
<dbReference type="PROSITE" id="PS00646">
    <property type="entry name" value="RIBOSOMAL_S13_1"/>
    <property type="match status" value="1"/>
</dbReference>
<dbReference type="PROSITE" id="PS50159">
    <property type="entry name" value="RIBOSOMAL_S13_2"/>
    <property type="match status" value="1"/>
</dbReference>
<evidence type="ECO:0000255" key="1">
    <source>
        <dbReference type="HAMAP-Rule" id="MF_01315"/>
    </source>
</evidence>
<evidence type="ECO:0000256" key="2">
    <source>
        <dbReference type="SAM" id="MobiDB-lite"/>
    </source>
</evidence>
<evidence type="ECO:0000305" key="3"/>
<keyword id="KW-0687">Ribonucleoprotein</keyword>
<keyword id="KW-0689">Ribosomal protein</keyword>
<keyword id="KW-0694">RNA-binding</keyword>
<keyword id="KW-0699">rRNA-binding</keyword>
<keyword id="KW-0820">tRNA-binding</keyword>
<accession>B8CNF5</accession>
<organism>
    <name type="scientific">Shewanella piezotolerans (strain WP3 / JCM 13877)</name>
    <dbReference type="NCBI Taxonomy" id="225849"/>
    <lineage>
        <taxon>Bacteria</taxon>
        <taxon>Pseudomonadati</taxon>
        <taxon>Pseudomonadota</taxon>
        <taxon>Gammaproteobacteria</taxon>
        <taxon>Alteromonadales</taxon>
        <taxon>Shewanellaceae</taxon>
        <taxon>Shewanella</taxon>
    </lineage>
</organism>
<name>RS13_SHEPW</name>
<sequence length="118" mass="13323">MARIAGINIPDQKHTVIALTAIYGIGRTRAQAICAATSIAEDAKIKELSEAQIDTLREEVANYIVEGDLRREVSMNIKRLMDLGCYRGLRHRRSLPLRGQRTKTNARTRKGPRKPIRK</sequence>
<reference key="1">
    <citation type="journal article" date="2008" name="PLoS ONE">
        <title>Environmental adaptation: genomic analysis of the piezotolerant and psychrotolerant deep-sea iron reducing bacterium Shewanella piezotolerans WP3.</title>
        <authorList>
            <person name="Wang F."/>
            <person name="Wang J."/>
            <person name="Jian H."/>
            <person name="Zhang B."/>
            <person name="Li S."/>
            <person name="Wang F."/>
            <person name="Zeng X."/>
            <person name="Gao L."/>
            <person name="Bartlett D.H."/>
            <person name="Yu J."/>
            <person name="Hu S."/>
            <person name="Xiao X."/>
        </authorList>
    </citation>
    <scope>NUCLEOTIDE SEQUENCE [LARGE SCALE GENOMIC DNA]</scope>
    <source>
        <strain>WP3 / JCM 13877</strain>
    </source>
</reference>
<comment type="function">
    <text evidence="1">Located at the top of the head of the 30S subunit, it contacts several helices of the 16S rRNA. In the 70S ribosome it contacts the 23S rRNA (bridge B1a) and protein L5 of the 50S subunit (bridge B1b), connecting the 2 subunits; these bridges are implicated in subunit movement. Contacts the tRNAs in the A and P-sites.</text>
</comment>
<comment type="subunit">
    <text evidence="1">Part of the 30S ribosomal subunit. Forms a loose heterodimer with protein S19. Forms two bridges to the 50S subunit in the 70S ribosome.</text>
</comment>
<comment type="similarity">
    <text evidence="1">Belongs to the universal ribosomal protein uS13 family.</text>
</comment>
<protein>
    <recommendedName>
        <fullName evidence="1">Small ribosomal subunit protein uS13</fullName>
    </recommendedName>
    <alternativeName>
        <fullName evidence="3">30S ribosomal protein S13</fullName>
    </alternativeName>
</protein>